<dbReference type="EMBL" id="AGSK01110808">
    <property type="status" value="NOT_ANNOTATED_CDS"/>
    <property type="molecule type" value="Genomic_DNA"/>
</dbReference>
<dbReference type="SMR" id="P0DN41"/>
<dbReference type="GlyCosmos" id="P0DN41">
    <property type="glycosylation" value="1 site, No reported glycans"/>
</dbReference>
<dbReference type="Ensembl" id="ENSBGRT00000045611.1">
    <property type="protein sequence ID" value="ENSBGRP00000039312.1"/>
    <property type="gene ID" value="ENSBGRG00000024723.1"/>
</dbReference>
<dbReference type="GeneTree" id="ENSGT00950000182929"/>
<dbReference type="Proteomes" id="UP000694520">
    <property type="component" value="Chromosome 20"/>
</dbReference>
<dbReference type="GO" id="GO:0034360">
    <property type="term" value="C:chylomicron remnant"/>
    <property type="evidence" value="ECO:0007669"/>
    <property type="project" value="Ensembl"/>
</dbReference>
<dbReference type="GO" id="GO:0005783">
    <property type="term" value="C:endoplasmic reticulum"/>
    <property type="evidence" value="ECO:0007669"/>
    <property type="project" value="Ensembl"/>
</dbReference>
<dbReference type="GO" id="GO:0070062">
    <property type="term" value="C:extracellular exosome"/>
    <property type="evidence" value="ECO:0000250"/>
    <property type="project" value="UniProtKB"/>
</dbReference>
<dbReference type="GO" id="GO:0031012">
    <property type="term" value="C:extracellular matrix"/>
    <property type="evidence" value="ECO:0000250"/>
    <property type="project" value="UniProtKB"/>
</dbReference>
<dbReference type="GO" id="GO:0005615">
    <property type="term" value="C:extracellular space"/>
    <property type="evidence" value="ECO:0000250"/>
    <property type="project" value="UniProtKB"/>
</dbReference>
<dbReference type="GO" id="GO:0098978">
    <property type="term" value="C:glutamatergic synapse"/>
    <property type="evidence" value="ECO:0007669"/>
    <property type="project" value="Ensembl"/>
</dbReference>
<dbReference type="GO" id="GO:0005794">
    <property type="term" value="C:Golgi apparatus"/>
    <property type="evidence" value="ECO:0007669"/>
    <property type="project" value="Ensembl"/>
</dbReference>
<dbReference type="GO" id="GO:0034364">
    <property type="term" value="C:high-density lipoprotein particle"/>
    <property type="evidence" value="ECO:0000250"/>
    <property type="project" value="UniProtKB"/>
</dbReference>
<dbReference type="GO" id="GO:0034363">
    <property type="term" value="C:intermediate-density lipoprotein particle"/>
    <property type="evidence" value="ECO:0000250"/>
    <property type="project" value="UniProtKB"/>
</dbReference>
<dbReference type="GO" id="GO:0034362">
    <property type="term" value="C:low-density lipoprotein particle"/>
    <property type="evidence" value="ECO:0000250"/>
    <property type="project" value="UniProtKB"/>
</dbReference>
<dbReference type="GO" id="GO:0042470">
    <property type="term" value="C:melanosome"/>
    <property type="evidence" value="ECO:0007669"/>
    <property type="project" value="Ensembl"/>
</dbReference>
<dbReference type="GO" id="GO:0097487">
    <property type="term" value="C:multivesicular body, internal vesicle"/>
    <property type="evidence" value="ECO:0000250"/>
    <property type="project" value="UniProtKB"/>
</dbReference>
<dbReference type="GO" id="GO:0005886">
    <property type="term" value="C:plasma membrane"/>
    <property type="evidence" value="ECO:0007669"/>
    <property type="project" value="GOC"/>
</dbReference>
<dbReference type="GO" id="GO:0043083">
    <property type="term" value="C:synaptic cleft"/>
    <property type="evidence" value="ECO:0007669"/>
    <property type="project" value="Ensembl"/>
</dbReference>
<dbReference type="GO" id="GO:0034361">
    <property type="term" value="C:very-low-density lipoprotein particle"/>
    <property type="evidence" value="ECO:0000250"/>
    <property type="project" value="UniProtKB"/>
</dbReference>
<dbReference type="GO" id="GO:0001540">
    <property type="term" value="F:amyloid-beta binding"/>
    <property type="evidence" value="ECO:0007669"/>
    <property type="project" value="Ensembl"/>
</dbReference>
<dbReference type="GO" id="GO:0016209">
    <property type="term" value="F:antioxidant activity"/>
    <property type="evidence" value="ECO:0007669"/>
    <property type="project" value="Ensembl"/>
</dbReference>
<dbReference type="GO" id="GO:0120020">
    <property type="term" value="F:cholesterol transfer activity"/>
    <property type="evidence" value="ECO:0007669"/>
    <property type="project" value="Ensembl"/>
</dbReference>
<dbReference type="GO" id="GO:0019899">
    <property type="term" value="F:enzyme binding"/>
    <property type="evidence" value="ECO:0007669"/>
    <property type="project" value="Ensembl"/>
</dbReference>
<dbReference type="GO" id="GO:0043395">
    <property type="term" value="F:heparan sulfate proteoglycan binding"/>
    <property type="evidence" value="ECO:0000250"/>
    <property type="project" value="UniProtKB"/>
</dbReference>
<dbReference type="GO" id="GO:0008201">
    <property type="term" value="F:heparin binding"/>
    <property type="evidence" value="ECO:0000250"/>
    <property type="project" value="UniProtKB"/>
</dbReference>
<dbReference type="GO" id="GO:0042802">
    <property type="term" value="F:identical protein binding"/>
    <property type="evidence" value="ECO:0000250"/>
    <property type="project" value="UniProtKB"/>
</dbReference>
<dbReference type="GO" id="GO:0071813">
    <property type="term" value="F:lipoprotein particle binding"/>
    <property type="evidence" value="ECO:0007669"/>
    <property type="project" value="Ensembl"/>
</dbReference>
<dbReference type="GO" id="GO:0050750">
    <property type="term" value="F:low-density lipoprotein particle receptor binding"/>
    <property type="evidence" value="ECO:0000250"/>
    <property type="project" value="UniProtKB"/>
</dbReference>
<dbReference type="GO" id="GO:0046911">
    <property type="term" value="F:metal chelating activity"/>
    <property type="evidence" value="ECO:0007669"/>
    <property type="project" value="Ensembl"/>
</dbReference>
<dbReference type="GO" id="GO:0060228">
    <property type="term" value="F:phosphatidylcholine-sterol O-acyltransferase activator activity"/>
    <property type="evidence" value="ECO:0007669"/>
    <property type="project" value="Ensembl"/>
</dbReference>
<dbReference type="GO" id="GO:0005543">
    <property type="term" value="F:phospholipid binding"/>
    <property type="evidence" value="ECO:0007669"/>
    <property type="project" value="Ensembl"/>
</dbReference>
<dbReference type="GO" id="GO:0042803">
    <property type="term" value="F:protein homodimerization activity"/>
    <property type="evidence" value="ECO:0007669"/>
    <property type="project" value="Ensembl"/>
</dbReference>
<dbReference type="GO" id="GO:0048018">
    <property type="term" value="F:receptor ligand activity"/>
    <property type="evidence" value="ECO:0007669"/>
    <property type="project" value="Ensembl"/>
</dbReference>
<dbReference type="GO" id="GO:0048156">
    <property type="term" value="F:tau protein binding"/>
    <property type="evidence" value="ECO:0007669"/>
    <property type="project" value="Ensembl"/>
</dbReference>
<dbReference type="GO" id="GO:0070326">
    <property type="term" value="F:very-low-density lipoprotein particle receptor binding"/>
    <property type="evidence" value="ECO:0007669"/>
    <property type="project" value="Ensembl"/>
</dbReference>
<dbReference type="GO" id="GO:0097113">
    <property type="term" value="P:AMPA glutamate receptor clustering"/>
    <property type="evidence" value="ECO:0007669"/>
    <property type="project" value="Ensembl"/>
</dbReference>
<dbReference type="GO" id="GO:0042982">
    <property type="term" value="P:amyloid precursor protein metabolic process"/>
    <property type="evidence" value="ECO:0007669"/>
    <property type="project" value="Ensembl"/>
</dbReference>
<dbReference type="GO" id="GO:0048844">
    <property type="term" value="P:artery morphogenesis"/>
    <property type="evidence" value="ECO:0007669"/>
    <property type="project" value="Ensembl"/>
</dbReference>
<dbReference type="GO" id="GO:0071402">
    <property type="term" value="P:cellular response to lipoprotein particle stimulus"/>
    <property type="evidence" value="ECO:0007669"/>
    <property type="project" value="Ensembl"/>
</dbReference>
<dbReference type="GO" id="GO:0006707">
    <property type="term" value="P:cholesterol catabolic process"/>
    <property type="evidence" value="ECO:0007669"/>
    <property type="project" value="Ensembl"/>
</dbReference>
<dbReference type="GO" id="GO:0033344">
    <property type="term" value="P:cholesterol efflux"/>
    <property type="evidence" value="ECO:0000250"/>
    <property type="project" value="UniProtKB"/>
</dbReference>
<dbReference type="GO" id="GO:0042632">
    <property type="term" value="P:cholesterol homeostasis"/>
    <property type="evidence" value="ECO:0007669"/>
    <property type="project" value="Ensembl"/>
</dbReference>
<dbReference type="GO" id="GO:0034382">
    <property type="term" value="P:chylomicron remnant clearance"/>
    <property type="evidence" value="ECO:0000250"/>
    <property type="project" value="UniProtKB"/>
</dbReference>
<dbReference type="GO" id="GO:0055089">
    <property type="term" value="P:fatty acid homeostasis"/>
    <property type="evidence" value="ECO:0007669"/>
    <property type="project" value="Ensembl"/>
</dbReference>
<dbReference type="GO" id="GO:0007186">
    <property type="term" value="P:G protein-coupled receptor signaling pathway"/>
    <property type="evidence" value="ECO:0007669"/>
    <property type="project" value="Ensembl"/>
</dbReference>
<dbReference type="GO" id="GO:0010467">
    <property type="term" value="P:gene expression"/>
    <property type="evidence" value="ECO:0007669"/>
    <property type="project" value="Ensembl"/>
</dbReference>
<dbReference type="GO" id="GO:0034380">
    <property type="term" value="P:high-density lipoprotein particle assembly"/>
    <property type="evidence" value="ECO:0000250"/>
    <property type="project" value="UniProtKB"/>
</dbReference>
<dbReference type="GO" id="GO:0034384">
    <property type="term" value="P:high-density lipoprotein particle clearance"/>
    <property type="evidence" value="ECO:0007669"/>
    <property type="project" value="Ensembl"/>
</dbReference>
<dbReference type="GO" id="GO:0034375">
    <property type="term" value="P:high-density lipoprotein particle remodeling"/>
    <property type="evidence" value="ECO:0007669"/>
    <property type="project" value="Ensembl"/>
</dbReference>
<dbReference type="GO" id="GO:0071831">
    <property type="term" value="P:intermediate-density lipoprotein particle clearance"/>
    <property type="evidence" value="ECO:0000250"/>
    <property type="project" value="UniProtKB"/>
</dbReference>
<dbReference type="GO" id="GO:0006874">
    <property type="term" value="P:intracellular calcium ion homeostasis"/>
    <property type="evidence" value="ECO:0007669"/>
    <property type="project" value="Ensembl"/>
</dbReference>
<dbReference type="GO" id="GO:0010877">
    <property type="term" value="P:lipid transport involved in lipid storage"/>
    <property type="evidence" value="ECO:0007669"/>
    <property type="project" value="Ensembl"/>
</dbReference>
<dbReference type="GO" id="GO:0042158">
    <property type="term" value="P:lipoprotein biosynthetic process"/>
    <property type="evidence" value="ECO:0000250"/>
    <property type="project" value="UniProtKB"/>
</dbReference>
<dbReference type="GO" id="GO:0042159">
    <property type="term" value="P:lipoprotein catabolic process"/>
    <property type="evidence" value="ECO:0007669"/>
    <property type="project" value="Ensembl"/>
</dbReference>
<dbReference type="GO" id="GO:0035641">
    <property type="term" value="P:locomotory exploration behavior"/>
    <property type="evidence" value="ECO:0007669"/>
    <property type="project" value="Ensembl"/>
</dbReference>
<dbReference type="GO" id="GO:0015909">
    <property type="term" value="P:long-chain fatty acid transport"/>
    <property type="evidence" value="ECO:0007669"/>
    <property type="project" value="Ensembl"/>
</dbReference>
<dbReference type="GO" id="GO:0007616">
    <property type="term" value="P:long-term memory"/>
    <property type="evidence" value="ECO:0007669"/>
    <property type="project" value="Ensembl"/>
</dbReference>
<dbReference type="GO" id="GO:0034374">
    <property type="term" value="P:low-density lipoprotein particle remodeling"/>
    <property type="evidence" value="ECO:0007669"/>
    <property type="project" value="Ensembl"/>
</dbReference>
<dbReference type="GO" id="GO:0051651">
    <property type="term" value="P:maintenance of location in cell"/>
    <property type="evidence" value="ECO:0007669"/>
    <property type="project" value="Ensembl"/>
</dbReference>
<dbReference type="GO" id="GO:0032438">
    <property type="term" value="P:melanosome organization"/>
    <property type="evidence" value="ECO:0000250"/>
    <property type="project" value="UniProtKB"/>
</dbReference>
<dbReference type="GO" id="GO:1905907">
    <property type="term" value="P:negative regulation of amyloid fibril formation"/>
    <property type="evidence" value="ECO:0000250"/>
    <property type="project" value="UniProtKB"/>
</dbReference>
<dbReference type="GO" id="GO:1902430">
    <property type="term" value="P:negative regulation of amyloid-beta formation"/>
    <property type="evidence" value="ECO:0007669"/>
    <property type="project" value="Ensembl"/>
</dbReference>
<dbReference type="GO" id="GO:0043537">
    <property type="term" value="P:negative regulation of blood vessel endothelial cell migration"/>
    <property type="evidence" value="ECO:0007669"/>
    <property type="project" value="Ensembl"/>
</dbReference>
<dbReference type="GO" id="GO:0090090">
    <property type="term" value="P:negative regulation of canonical Wnt signaling pathway"/>
    <property type="evidence" value="ECO:0007669"/>
    <property type="project" value="Ensembl"/>
</dbReference>
<dbReference type="GO" id="GO:0045541">
    <property type="term" value="P:negative regulation of cholesterol biosynthetic process"/>
    <property type="evidence" value="ECO:0007669"/>
    <property type="project" value="Ensembl"/>
</dbReference>
<dbReference type="GO" id="GO:0001937">
    <property type="term" value="P:negative regulation of endothelial cell proliferation"/>
    <property type="evidence" value="ECO:0007669"/>
    <property type="project" value="Ensembl"/>
</dbReference>
<dbReference type="GO" id="GO:0010629">
    <property type="term" value="P:negative regulation of gene expression"/>
    <property type="evidence" value="ECO:0007669"/>
    <property type="project" value="Ensembl"/>
</dbReference>
<dbReference type="GO" id="GO:0050728">
    <property type="term" value="P:negative regulation of inflammatory response"/>
    <property type="evidence" value="ECO:0007669"/>
    <property type="project" value="Ensembl"/>
</dbReference>
<dbReference type="GO" id="GO:1900272">
    <property type="term" value="P:negative regulation of long-term synaptic potentiation"/>
    <property type="evidence" value="ECO:0007669"/>
    <property type="project" value="Ensembl"/>
</dbReference>
<dbReference type="GO" id="GO:0010977">
    <property type="term" value="P:negative regulation of neuron projection development"/>
    <property type="evidence" value="ECO:0007669"/>
    <property type="project" value="Ensembl"/>
</dbReference>
<dbReference type="GO" id="GO:0010544">
    <property type="term" value="P:negative regulation of platelet activation"/>
    <property type="evidence" value="ECO:0007669"/>
    <property type="project" value="Ensembl"/>
</dbReference>
<dbReference type="GO" id="GO:0050709">
    <property type="term" value="P:negative regulation of protein secretion"/>
    <property type="evidence" value="ECO:0007669"/>
    <property type="project" value="Ensembl"/>
</dbReference>
<dbReference type="GO" id="GO:0048662">
    <property type="term" value="P:negative regulation of smooth muscle cell proliferation"/>
    <property type="evidence" value="ECO:0007669"/>
    <property type="project" value="Ensembl"/>
</dbReference>
<dbReference type="GO" id="GO:0090209">
    <property type="term" value="P:negative regulation of triglyceride metabolic process"/>
    <property type="evidence" value="ECO:0007669"/>
    <property type="project" value="Ensembl"/>
</dbReference>
<dbReference type="GO" id="GO:0031175">
    <property type="term" value="P:neuron projection development"/>
    <property type="evidence" value="ECO:0007669"/>
    <property type="project" value="Ensembl"/>
</dbReference>
<dbReference type="GO" id="GO:0038060">
    <property type="term" value="P:nitric oxide-cGMP-mediated signaling"/>
    <property type="evidence" value="ECO:0007669"/>
    <property type="project" value="Ensembl"/>
</dbReference>
<dbReference type="GO" id="GO:0097114">
    <property type="term" value="P:NMDA glutamate receptor clustering"/>
    <property type="evidence" value="ECO:0007669"/>
    <property type="project" value="Ensembl"/>
</dbReference>
<dbReference type="GO" id="GO:0033700">
    <property type="term" value="P:phospholipid efflux"/>
    <property type="evidence" value="ECO:0007669"/>
    <property type="project" value="Ensembl"/>
</dbReference>
<dbReference type="GO" id="GO:0044794">
    <property type="term" value="P:positive regulation by host of viral process"/>
    <property type="evidence" value="ECO:0007669"/>
    <property type="project" value="Ensembl"/>
</dbReference>
<dbReference type="GO" id="GO:1900223">
    <property type="term" value="P:positive regulation of amyloid-beta clearance"/>
    <property type="evidence" value="ECO:0000250"/>
    <property type="project" value="UniProtKB"/>
</dbReference>
<dbReference type="GO" id="GO:0010875">
    <property type="term" value="P:positive regulation of cholesterol efflux"/>
    <property type="evidence" value="ECO:0007669"/>
    <property type="project" value="Ensembl"/>
</dbReference>
<dbReference type="GO" id="GO:0090205">
    <property type="term" value="P:positive regulation of cholesterol metabolic process"/>
    <property type="evidence" value="ECO:0007669"/>
    <property type="project" value="Ensembl"/>
</dbReference>
<dbReference type="GO" id="GO:0060999">
    <property type="term" value="P:positive regulation of dendritic spine development"/>
    <property type="evidence" value="ECO:0007669"/>
    <property type="project" value="Ensembl"/>
</dbReference>
<dbReference type="GO" id="GO:1902952">
    <property type="term" value="P:positive regulation of dendritic spine maintenance"/>
    <property type="evidence" value="ECO:0007669"/>
    <property type="project" value="Ensembl"/>
</dbReference>
<dbReference type="GO" id="GO:0045893">
    <property type="term" value="P:positive regulation of DNA-templated transcription"/>
    <property type="evidence" value="ECO:0007669"/>
    <property type="project" value="Ensembl"/>
</dbReference>
<dbReference type="GO" id="GO:0045807">
    <property type="term" value="P:positive regulation of endocytosis"/>
    <property type="evidence" value="ECO:0007669"/>
    <property type="project" value="Ensembl"/>
</dbReference>
<dbReference type="GO" id="GO:0070374">
    <property type="term" value="P:positive regulation of ERK1 and ERK2 cascade"/>
    <property type="evidence" value="ECO:0007669"/>
    <property type="project" value="Ensembl"/>
</dbReference>
<dbReference type="GO" id="GO:0046889">
    <property type="term" value="P:positive regulation of lipid biosynthetic process"/>
    <property type="evidence" value="ECO:0007669"/>
    <property type="project" value="Ensembl"/>
</dbReference>
<dbReference type="GO" id="GO:1903002">
    <property type="term" value="P:positive regulation of lipid transport across blood-brain barrier"/>
    <property type="evidence" value="ECO:0007669"/>
    <property type="project" value="Ensembl"/>
</dbReference>
<dbReference type="GO" id="GO:0140077">
    <property type="term" value="P:positive regulation of lipoprotein transport"/>
    <property type="evidence" value="ECO:0007669"/>
    <property type="project" value="Ensembl"/>
</dbReference>
<dbReference type="GO" id="GO:0032805">
    <property type="term" value="P:positive regulation of low-density lipoprotein particle receptor catabolic process"/>
    <property type="evidence" value="ECO:0007669"/>
    <property type="project" value="Ensembl"/>
</dbReference>
<dbReference type="GO" id="GO:0051044">
    <property type="term" value="P:positive regulation of membrane protein ectodomain proteolysis"/>
    <property type="evidence" value="ECO:0007669"/>
    <property type="project" value="Ensembl"/>
</dbReference>
<dbReference type="GO" id="GO:0010976">
    <property type="term" value="P:positive regulation of neuron projection development"/>
    <property type="evidence" value="ECO:0007669"/>
    <property type="project" value="Ensembl"/>
</dbReference>
<dbReference type="GO" id="GO:0045429">
    <property type="term" value="P:positive regulation of nitric oxide biosynthetic process"/>
    <property type="evidence" value="ECO:0007669"/>
    <property type="project" value="Ensembl"/>
</dbReference>
<dbReference type="GO" id="GO:1902995">
    <property type="term" value="P:positive regulation of phospholipid efflux"/>
    <property type="evidence" value="ECO:0007669"/>
    <property type="project" value="Ensembl"/>
</dbReference>
<dbReference type="GO" id="GO:0017038">
    <property type="term" value="P:protein import"/>
    <property type="evidence" value="ECO:0007669"/>
    <property type="project" value="Ensembl"/>
</dbReference>
<dbReference type="GO" id="GO:0006898">
    <property type="term" value="P:receptor-mediated endocytosis"/>
    <property type="evidence" value="ECO:0007669"/>
    <property type="project" value="Ensembl"/>
</dbReference>
<dbReference type="GO" id="GO:0042981">
    <property type="term" value="P:regulation of apoptotic process"/>
    <property type="evidence" value="ECO:0007669"/>
    <property type="project" value="Ensembl"/>
</dbReference>
<dbReference type="GO" id="GO:2000822">
    <property type="term" value="P:regulation of behavioral fear response"/>
    <property type="evidence" value="ECO:0007669"/>
    <property type="project" value="Ensembl"/>
</dbReference>
<dbReference type="GO" id="GO:0032489">
    <property type="term" value="P:regulation of Cdc42 protein signal transduction"/>
    <property type="evidence" value="ECO:0007669"/>
    <property type="project" value="Ensembl"/>
</dbReference>
<dbReference type="GO" id="GO:1905890">
    <property type="term" value="P:regulation of cellular response to very-low-density lipoprotein particle stimulus"/>
    <property type="evidence" value="ECO:0007669"/>
    <property type="project" value="Ensembl"/>
</dbReference>
<dbReference type="GO" id="GO:0045088">
    <property type="term" value="P:regulation of innate immune response"/>
    <property type="evidence" value="ECO:0007669"/>
    <property type="project" value="Ensembl"/>
</dbReference>
<dbReference type="GO" id="GO:0061136">
    <property type="term" value="P:regulation of proteasomal protein catabolic process"/>
    <property type="evidence" value="ECO:0007669"/>
    <property type="project" value="Ensembl"/>
</dbReference>
<dbReference type="GO" id="GO:0043254">
    <property type="term" value="P:regulation of protein-containing complex assembly"/>
    <property type="evidence" value="ECO:0007669"/>
    <property type="project" value="Ensembl"/>
</dbReference>
<dbReference type="GO" id="GO:0061771">
    <property type="term" value="P:response to caloric restriction"/>
    <property type="evidence" value="ECO:0007669"/>
    <property type="project" value="Ensembl"/>
</dbReference>
<dbReference type="GO" id="GO:0002021">
    <property type="term" value="P:response to dietary excess"/>
    <property type="evidence" value="ECO:0007669"/>
    <property type="project" value="Ensembl"/>
</dbReference>
<dbReference type="GO" id="GO:0006979">
    <property type="term" value="P:response to oxidative stress"/>
    <property type="evidence" value="ECO:0007669"/>
    <property type="project" value="Ensembl"/>
</dbReference>
<dbReference type="GO" id="GO:0043691">
    <property type="term" value="P:reverse cholesterol transport"/>
    <property type="evidence" value="ECO:0007669"/>
    <property type="project" value="Ensembl"/>
</dbReference>
<dbReference type="GO" id="GO:0070328">
    <property type="term" value="P:triglyceride homeostasis"/>
    <property type="evidence" value="ECO:0007669"/>
    <property type="project" value="Ensembl"/>
</dbReference>
<dbReference type="GO" id="GO:0006641">
    <property type="term" value="P:triglyceride metabolic process"/>
    <property type="evidence" value="ECO:0007669"/>
    <property type="project" value="Ensembl"/>
</dbReference>
<dbReference type="GO" id="GO:0071830">
    <property type="term" value="P:triglyceride-rich lipoprotein particle clearance"/>
    <property type="evidence" value="ECO:0000250"/>
    <property type="project" value="UniProtKB"/>
</dbReference>
<dbReference type="GO" id="GO:0042311">
    <property type="term" value="P:vasodilation"/>
    <property type="evidence" value="ECO:0007669"/>
    <property type="project" value="Ensembl"/>
</dbReference>
<dbReference type="GO" id="GO:0034447">
    <property type="term" value="P:very-low-density lipoprotein particle clearance"/>
    <property type="evidence" value="ECO:0000250"/>
    <property type="project" value="UniProtKB"/>
</dbReference>
<dbReference type="GO" id="GO:0034372">
    <property type="term" value="P:very-low-density lipoprotein particle remodeling"/>
    <property type="evidence" value="ECO:0007669"/>
    <property type="project" value="Ensembl"/>
</dbReference>
<dbReference type="GO" id="GO:0019068">
    <property type="term" value="P:virion assembly"/>
    <property type="evidence" value="ECO:0007669"/>
    <property type="project" value="Ensembl"/>
</dbReference>
<dbReference type="FunFam" id="1.20.120.20:FF:000002">
    <property type="entry name" value="Apolipoprotein E"/>
    <property type="match status" value="1"/>
</dbReference>
<dbReference type="FunFam" id="1.20.120.20:FF:000003">
    <property type="entry name" value="Apolipoprotein E"/>
    <property type="match status" value="1"/>
</dbReference>
<dbReference type="Gene3D" id="1.20.120.20">
    <property type="entry name" value="Apolipoprotein"/>
    <property type="match status" value="2"/>
</dbReference>
<dbReference type="InterPro" id="IPR000074">
    <property type="entry name" value="ApoA_E"/>
</dbReference>
<dbReference type="InterPro" id="IPR050163">
    <property type="entry name" value="Apolipoprotein_A1/A4/E"/>
</dbReference>
<dbReference type="PANTHER" id="PTHR18976">
    <property type="entry name" value="APOLIPOPROTEIN"/>
    <property type="match status" value="1"/>
</dbReference>
<dbReference type="PANTHER" id="PTHR18976:SF2">
    <property type="entry name" value="APOLIPOPROTEIN E"/>
    <property type="match status" value="1"/>
</dbReference>
<dbReference type="Pfam" id="PF01442">
    <property type="entry name" value="Apolipoprotein"/>
    <property type="match status" value="1"/>
</dbReference>
<dbReference type="SUPFAM" id="SSF58113">
    <property type="entry name" value="Apolipoprotein A-I"/>
    <property type="match status" value="1"/>
</dbReference>
<feature type="signal peptide" evidence="3">
    <location>
        <begin position="1"/>
        <end position="18"/>
    </location>
</feature>
<feature type="chain" id="PRO_0000435009" description="Apolipoprotein E">
    <location>
        <begin position="19"/>
        <end position="316"/>
    </location>
</feature>
<feature type="repeat" description="1">
    <location>
        <begin position="79"/>
        <end position="100"/>
    </location>
</feature>
<feature type="repeat" description="2">
    <location>
        <begin position="101"/>
        <end position="122"/>
    </location>
</feature>
<feature type="repeat" description="3">
    <location>
        <begin position="123"/>
        <end position="144"/>
    </location>
</feature>
<feature type="repeat" description="4">
    <location>
        <begin position="145"/>
        <end position="166"/>
    </location>
</feature>
<feature type="repeat" description="5">
    <location>
        <begin position="167"/>
        <end position="188"/>
    </location>
</feature>
<feature type="repeat" description="6">
    <location>
        <begin position="189"/>
        <end position="210"/>
    </location>
</feature>
<feature type="repeat" description="7">
    <location>
        <begin position="211"/>
        <end position="232"/>
    </location>
</feature>
<feature type="repeat" description="8">
    <location>
        <begin position="233"/>
        <end position="254"/>
    </location>
</feature>
<feature type="region of interest" description="8 X 22 AA approximate tandem repeats">
    <location>
        <begin position="79"/>
        <end position="254"/>
    </location>
</feature>
<feature type="region of interest" description="LDL and other lipoprotein receptors binding" evidence="1">
    <location>
        <begin position="157"/>
        <end position="167"/>
    </location>
</feature>
<feature type="region of interest" description="Lipid-binding and lipoprotein association" evidence="1">
    <location>
        <begin position="209"/>
        <end position="289"/>
    </location>
</feature>
<feature type="region of interest" description="Homooligomerization" evidence="1">
    <location>
        <begin position="265"/>
        <end position="316"/>
    </location>
</feature>
<feature type="region of interest" description="Specificity for association with VLDL" evidence="1">
    <location>
        <begin position="277"/>
        <end position="289"/>
    </location>
</feature>
<feature type="binding site" evidence="1">
    <location>
        <begin position="161"/>
        <end position="164"/>
    </location>
    <ligand>
        <name>heparin</name>
        <dbReference type="ChEBI" id="CHEBI:28304"/>
    </ligand>
</feature>
<feature type="binding site" evidence="1">
    <location>
        <begin position="228"/>
        <end position="235"/>
    </location>
    <ligand>
        <name>heparin</name>
        <dbReference type="ChEBI" id="CHEBI:28304"/>
    </ligand>
</feature>
<feature type="modified residue" description="Methionine sulfoxide" evidence="2">
    <location>
        <position position="142"/>
    </location>
</feature>
<feature type="modified residue" description="Phosphoserine; by FAM20C" evidence="1">
    <location>
        <position position="146"/>
    </location>
</feature>
<feature type="glycosylation site" description="O-linked (GalNAc...) threonine" evidence="1">
    <location>
        <position position="211"/>
    </location>
</feature>
<organism>
    <name type="scientific">Bos mutus grunniens</name>
    <name type="common">Wild yak</name>
    <name type="synonym">Bos grunniens</name>
    <dbReference type="NCBI Taxonomy" id="30521"/>
    <lineage>
        <taxon>Eukaryota</taxon>
        <taxon>Metazoa</taxon>
        <taxon>Chordata</taxon>
        <taxon>Craniata</taxon>
        <taxon>Vertebrata</taxon>
        <taxon>Euteleostomi</taxon>
        <taxon>Mammalia</taxon>
        <taxon>Eutheria</taxon>
        <taxon>Laurasiatheria</taxon>
        <taxon>Artiodactyla</taxon>
        <taxon>Ruminantia</taxon>
        <taxon>Pecora</taxon>
        <taxon>Bovidae</taxon>
        <taxon>Bovinae</taxon>
        <taxon>Bos</taxon>
    </lineage>
</organism>
<evidence type="ECO:0000250" key="1">
    <source>
        <dbReference type="UniProtKB" id="P02649"/>
    </source>
</evidence>
<evidence type="ECO:0000250" key="2">
    <source>
        <dbReference type="UniProtKB" id="P08226"/>
    </source>
</evidence>
<evidence type="ECO:0000255" key="3"/>
<evidence type="ECO:0000305" key="4"/>
<accession>P0DN41</accession>
<reference key="1">
    <citation type="journal article" date="2012" name="Nat. Genet.">
        <title>The yak genome and adaptation to life at high altitude.</title>
        <authorList>
            <person name="Qiu Q."/>
            <person name="Zhang G."/>
            <person name="Ma T."/>
            <person name="Qian W."/>
            <person name="Wang J."/>
            <person name="Ye Z."/>
            <person name="Cao C."/>
            <person name="Hu Q."/>
            <person name="Kim J."/>
            <person name="Larkin D.M."/>
            <person name="Auvil L."/>
            <person name="Capitanu B."/>
            <person name="Ma J."/>
            <person name="Lewin H.A."/>
            <person name="Qian X."/>
            <person name="Lang Y."/>
            <person name="Zhou R."/>
            <person name="Wang L."/>
            <person name="Wang K."/>
            <person name="Xia J."/>
            <person name="Liao S."/>
            <person name="Pan S."/>
            <person name="Lu X."/>
            <person name="Hou H."/>
            <person name="Wang Y."/>
            <person name="Zang X."/>
            <person name="Yin Y."/>
            <person name="Ma H."/>
            <person name="Zhang J."/>
            <person name="Wang Z."/>
            <person name="Zhang Y."/>
            <person name="Zhang D."/>
            <person name="Yonezawa T."/>
            <person name="Hasegawa M."/>
            <person name="Zhong Y."/>
            <person name="Liu W."/>
            <person name="Zhang Y."/>
            <person name="Huang Z."/>
            <person name="Zhang S."/>
            <person name="Long R."/>
            <person name="Yang H."/>
            <person name="Wang J."/>
            <person name="Lenstra J.A."/>
            <person name="Cooper D.N."/>
            <person name="Wu Y."/>
            <person name="Wang J."/>
            <person name="Shi P."/>
            <person name="Wang J."/>
            <person name="Liu J."/>
        </authorList>
    </citation>
    <scope>NUCLEOTIDE SEQUENCE [LARGE SCALE GENOMIC DNA]</scope>
</reference>
<reference key="2">
    <citation type="unpublished observations" date="2015-10">
        <authorList>
            <person name="Puppione D.L."/>
        </authorList>
    </citation>
    <scope>IDENTIFICATION</scope>
</reference>
<sequence>MKVLWVAVVVALLAGCQADMEGELGPEEPLTTQQPRGKDSQPWEQALGRFWDYLRWVQTLSDQVQEELLNTQVIQELTALMEETMKEVKAYKEELEGQLGPMAQETQARVSKELQAAQARLGSDMEDLRNRLAQYRSEVQAMLGQSTEELRARMASHLRKLRKRLLRDADDLKKRLAVYQAGASEGAERSLSAVRERFGPLVEQGQSRAATLSTLAGQPLLERAEAWRQKLHGRLEEVGVRAQDRLDKIRQQLEEVHAKVEEQGNQMRLQAEAFQARLRSWFEPLVEDMQRQWAGLVEKVQLALRPSPTSPPSENH</sequence>
<gene>
    <name type="primary">APOE</name>
</gene>
<keyword id="KW-0162">Chylomicron</keyword>
<keyword id="KW-0967">Endosome</keyword>
<keyword id="KW-0272">Extracellular matrix</keyword>
<keyword id="KW-0325">Glycoprotein</keyword>
<keyword id="KW-0345">HDL</keyword>
<keyword id="KW-0358">Heparin-binding</keyword>
<keyword id="KW-0445">Lipid transport</keyword>
<keyword id="KW-0446">Lipid-binding</keyword>
<keyword id="KW-0558">Oxidation</keyword>
<keyword id="KW-0597">Phosphoprotein</keyword>
<keyword id="KW-1185">Reference proteome</keyword>
<keyword id="KW-0677">Repeat</keyword>
<keyword id="KW-0964">Secreted</keyword>
<keyword id="KW-0732">Signal</keyword>
<keyword id="KW-0813">Transport</keyword>
<keyword id="KW-0850">VLDL</keyword>
<proteinExistence type="inferred from homology"/>
<comment type="function">
    <text evidence="1">APOE is an apolipoprotein, a protein associating with lipid particles, that mainly functions in lipoprotein-mediated lipid transport between organs via the plasma and interstitial fluids. APOE is a core component of plasma lipoproteins and is involved in their production, conversion and clearance. Apolipoproteins are amphipathic molecules that interact both with lipids of the lipoprotein particle core and the aqueous environment of the plasma. As such, APOE associates with chylomicrons, chylomicron remnants, very low density lipoproteins (VLDL) and intermediate density lipoproteins (IDL) but shows a preferential binding to high-density lipoproteins (HDL). It also binds a wide range of cellular receptors including the LDL receptor/LDLR and the very low-density lipoprotein receptor/VLDLR that mediate the cellular uptake of the APOE-containing lipoprotein particles. Finally, APOE also has a heparin-binding activity and binds heparan-sulfate proteoglycans on the surface of cells, a property that supports the capture and the receptor-mediated uptake of APOE-containing lipoproteins by cells.</text>
</comment>
<comment type="subunit">
    <text evidence="1">Homotetramer. May interact with ABCA1; functionally associated with ABCA1 in the biogenesis of HDLs. May interact with APP/A4 amyloid-beta peptide; the interaction is extremely stable in vitro but its physiological significance is unclear. May interact with MAPT. May interact with MAP2. In the cerebrospinal fluid, interacts with secreted SORL1. Interacts with PMEL; this allows the loading of PMEL luminal fragment on ILVs to induce fibril nucleation.</text>
</comment>
<comment type="subcellular location">
    <subcellularLocation>
        <location evidence="1">Secreted</location>
    </subcellularLocation>
    <subcellularLocation>
        <location evidence="1">Secreted</location>
        <location evidence="1">Extracellular space</location>
    </subcellularLocation>
    <subcellularLocation>
        <location evidence="1">Secreted</location>
        <location evidence="1">Extracellular space</location>
        <location evidence="1">Extracellular matrix</location>
    </subcellularLocation>
    <subcellularLocation>
        <location evidence="1">Extracellular vesicle</location>
    </subcellularLocation>
    <subcellularLocation>
        <location evidence="1">Endosome</location>
        <location evidence="1">Multivesicular body</location>
    </subcellularLocation>
    <text evidence="1">In the plasma, APOE is associated with chylomicrons, chylomicrons remnants, VLDL, LDL and HDL lipoproteins. Lipid poor oligomeric APOE is associated with the extracellular matrix in a calcium- and heparan-sulfate proteoglycans-dependent manner. Lipidation induces the release from the extracellular matrix. Colocalizes with CD63 and PMEL at exosomes and in intraluminal vesicles within multivesicular endosomes.</text>
</comment>
<comment type="PTM">
    <text evidence="1">APOE exists as multiple glycosylated and sialylated glycoforms within cells and in plasma. The extent of glycosylation and sialylation are tissue and context specific.</text>
</comment>
<comment type="PTM">
    <text evidence="1">Glycated in plasma VLDL.</text>
</comment>
<comment type="PTM">
    <text evidence="1">Phosphorylated by FAM20C in the extracellular medium.</text>
</comment>
<comment type="similarity">
    <text evidence="4">Belongs to the apolipoprotein A1/A4/E family.</text>
</comment>
<name>APOE_BOSMU</name>
<protein>
    <recommendedName>
        <fullName>Apolipoprotein E</fullName>
        <shortName>Apo-E</shortName>
    </recommendedName>
</protein>